<comment type="subcellular location">
    <subcellularLocation>
        <location evidence="1">Secreted</location>
    </subcellularLocation>
</comment>
<comment type="similarity">
    <text evidence="1">Belongs to the YebF family.</text>
</comment>
<comment type="sequence caution" evidence="3">
    <conflict type="erroneous initiation">
        <sequence resource="EMBL-CDS" id="ABB65790"/>
    </conflict>
</comment>
<keyword id="KW-1015">Disulfide bond</keyword>
<keyword id="KW-0964">Secreted</keyword>
<keyword id="KW-0732">Signal</keyword>
<sequence length="118" mass="12904">MKKRGAFLGLLLVSACASVFAANNETSKSVTFPKCEGLDAAGIAASVKRDYQQNRVARWADDQKIVGQADPVAWVSLQDIQGKDDKWSVPLTVRGKSADIHYQVSVDCKAGMAEYQRR</sequence>
<proteinExistence type="inferred from homology"/>
<evidence type="ECO:0000255" key="1">
    <source>
        <dbReference type="HAMAP-Rule" id="MF_01435"/>
    </source>
</evidence>
<evidence type="ECO:0000255" key="2">
    <source>
        <dbReference type="PROSITE-ProRule" id="PRU01323"/>
    </source>
</evidence>
<evidence type="ECO:0000305" key="3"/>
<name>YEBF_SHIBS</name>
<organism>
    <name type="scientific">Shigella boydii serotype 4 (strain Sb227)</name>
    <dbReference type="NCBI Taxonomy" id="300268"/>
    <lineage>
        <taxon>Bacteria</taxon>
        <taxon>Pseudomonadati</taxon>
        <taxon>Pseudomonadota</taxon>
        <taxon>Gammaproteobacteria</taxon>
        <taxon>Enterobacterales</taxon>
        <taxon>Enterobacteriaceae</taxon>
        <taxon>Shigella</taxon>
    </lineage>
</organism>
<dbReference type="EMBL" id="CP000036">
    <property type="protein sequence ID" value="ABB65790.1"/>
    <property type="status" value="ALT_INIT"/>
    <property type="molecule type" value="Genomic_DNA"/>
</dbReference>
<dbReference type="RefSeq" id="WP_001295500.1">
    <property type="nucleotide sequence ID" value="NC_007613.1"/>
</dbReference>
<dbReference type="BMRB" id="Q322G8"/>
<dbReference type="SMR" id="Q322G8"/>
<dbReference type="GeneID" id="93776114"/>
<dbReference type="KEGG" id="sbo:SBO_1155"/>
<dbReference type="HOGENOM" id="CLU_161319_1_0_6"/>
<dbReference type="Proteomes" id="UP000007067">
    <property type="component" value="Chromosome"/>
</dbReference>
<dbReference type="GO" id="GO:0005576">
    <property type="term" value="C:extracellular region"/>
    <property type="evidence" value="ECO:0007669"/>
    <property type="project" value="UniProtKB-SubCell"/>
</dbReference>
<dbReference type="Gene3D" id="3.10.450.300">
    <property type="entry name" value="YebF/Colicin-M immunity protein"/>
    <property type="match status" value="1"/>
</dbReference>
<dbReference type="HAMAP" id="MF_01435">
    <property type="entry name" value="YebF"/>
    <property type="match status" value="1"/>
</dbReference>
<dbReference type="InterPro" id="IPR020236">
    <property type="entry name" value="Uncharacterised_YebF"/>
</dbReference>
<dbReference type="InterPro" id="IPR038703">
    <property type="entry name" value="YebF/Cmi_sf"/>
</dbReference>
<dbReference type="InterPro" id="IPR025603">
    <property type="entry name" value="YebF/ColM_immunity"/>
</dbReference>
<dbReference type="NCBIfam" id="NF010224">
    <property type="entry name" value="PRK13680.1"/>
    <property type="match status" value="1"/>
</dbReference>
<dbReference type="NCBIfam" id="NF041240">
    <property type="entry name" value="YebF_not_Cmi"/>
    <property type="match status" value="1"/>
</dbReference>
<dbReference type="Pfam" id="PF13995">
    <property type="entry name" value="YebF"/>
    <property type="match status" value="1"/>
</dbReference>
<dbReference type="PROSITE" id="PS51979">
    <property type="entry name" value="YEBF_CMI"/>
    <property type="match status" value="1"/>
</dbReference>
<protein>
    <recommendedName>
        <fullName evidence="1">Protein YebF</fullName>
    </recommendedName>
</protein>
<gene>
    <name evidence="1" type="primary">yebF</name>
    <name type="ordered locus">SBO_1155</name>
</gene>
<feature type="signal peptide" evidence="1">
    <location>
        <begin position="1"/>
        <end position="21"/>
    </location>
</feature>
<feature type="chain" id="PRO_0000045954" description="Protein YebF">
    <location>
        <begin position="22"/>
        <end position="118"/>
    </location>
</feature>
<feature type="domain" description="YebF/Cmi" evidence="2">
    <location>
        <begin position="31"/>
        <end position="118"/>
    </location>
</feature>
<feature type="disulfide bond" evidence="2">
    <location>
        <begin position="35"/>
        <end position="108"/>
    </location>
</feature>
<accession>Q322G8</accession>
<reference key="1">
    <citation type="journal article" date="2005" name="Nucleic Acids Res.">
        <title>Genome dynamics and diversity of Shigella species, the etiologic agents of bacillary dysentery.</title>
        <authorList>
            <person name="Yang F."/>
            <person name="Yang J."/>
            <person name="Zhang X."/>
            <person name="Chen L."/>
            <person name="Jiang Y."/>
            <person name="Yan Y."/>
            <person name="Tang X."/>
            <person name="Wang J."/>
            <person name="Xiong Z."/>
            <person name="Dong J."/>
            <person name="Xue Y."/>
            <person name="Zhu Y."/>
            <person name="Xu X."/>
            <person name="Sun L."/>
            <person name="Chen S."/>
            <person name="Nie H."/>
            <person name="Peng J."/>
            <person name="Xu J."/>
            <person name="Wang Y."/>
            <person name="Yuan Z."/>
            <person name="Wen Y."/>
            <person name="Yao Z."/>
            <person name="Shen Y."/>
            <person name="Qiang B."/>
            <person name="Hou Y."/>
            <person name="Yu J."/>
            <person name="Jin Q."/>
        </authorList>
    </citation>
    <scope>NUCLEOTIDE SEQUENCE [LARGE SCALE GENOMIC DNA]</scope>
    <source>
        <strain>Sb227</strain>
    </source>
</reference>